<name>MDH_STRAR</name>
<accession>P19982</accession>
<reference key="1">
    <citation type="journal article" date="1989" name="Biol. Chem. Hoppe-Seyler">
        <title>Purification and N-terminal amino-acid sequences of bacterial malate dehydrogenases from six actinomycetales strains and from Phenylobacterium immobile, strain E.</title>
        <authorList>
            <person name="Rommel T.O."/>
            <person name="Hund H.-K."/>
            <person name="Speth A.R."/>
            <person name="Lingens F."/>
        </authorList>
    </citation>
    <scope>PROTEIN SEQUENCE</scope>
</reference>
<feature type="chain" id="PRO_0000113392" description="Malate dehydrogenase">
    <location>
        <begin position="1"/>
        <end position="31" status="greater than"/>
    </location>
</feature>
<feature type="binding site" evidence="1">
    <location>
        <begin position="11"/>
        <end position="17"/>
    </location>
    <ligand>
        <name>NAD(+)</name>
        <dbReference type="ChEBI" id="CHEBI:57540"/>
    </ligand>
</feature>
<feature type="non-terminal residue">
    <location>
        <position position="31"/>
    </location>
</feature>
<sequence>TRTPVNVTVTGAAGQIGYALLFRIASGHLLG</sequence>
<gene>
    <name type="primary">mdh</name>
</gene>
<comment type="function">
    <text evidence="1">Catalyzes the reversible oxidation of malate to oxaloacetate.</text>
</comment>
<comment type="catalytic activity">
    <reaction evidence="2">
        <text>(S)-malate + NAD(+) = oxaloacetate + NADH + H(+)</text>
        <dbReference type="Rhea" id="RHEA:21432"/>
        <dbReference type="ChEBI" id="CHEBI:15378"/>
        <dbReference type="ChEBI" id="CHEBI:15589"/>
        <dbReference type="ChEBI" id="CHEBI:16452"/>
        <dbReference type="ChEBI" id="CHEBI:57540"/>
        <dbReference type="ChEBI" id="CHEBI:57945"/>
        <dbReference type="EC" id="1.1.1.37"/>
    </reaction>
</comment>
<comment type="similarity">
    <text evidence="3">Belongs to the LDH/MDH superfamily. MDH type 2 family.</text>
</comment>
<organism>
    <name type="scientific">Streptomyces atratus</name>
    <dbReference type="NCBI Taxonomy" id="1893"/>
    <lineage>
        <taxon>Bacteria</taxon>
        <taxon>Bacillati</taxon>
        <taxon>Actinomycetota</taxon>
        <taxon>Actinomycetes</taxon>
        <taxon>Kitasatosporales</taxon>
        <taxon>Streptomycetaceae</taxon>
        <taxon>Streptomyces</taxon>
    </lineage>
</organism>
<evidence type="ECO:0000250" key="1"/>
<evidence type="ECO:0000255" key="2">
    <source>
        <dbReference type="PROSITE-ProRule" id="PRU10004"/>
    </source>
</evidence>
<evidence type="ECO:0000305" key="3"/>
<dbReference type="EC" id="1.1.1.37"/>
<dbReference type="PIR" id="S04960">
    <property type="entry name" value="S04960"/>
</dbReference>
<dbReference type="SMR" id="P19982"/>
<dbReference type="STRING" id="1893.SAMN02787144_1011139"/>
<dbReference type="GO" id="GO:0030060">
    <property type="term" value="F:L-malate dehydrogenase (NAD+) activity"/>
    <property type="evidence" value="ECO:0007669"/>
    <property type="project" value="UniProtKB-EC"/>
</dbReference>
<dbReference type="GO" id="GO:0006099">
    <property type="term" value="P:tricarboxylic acid cycle"/>
    <property type="evidence" value="ECO:0007669"/>
    <property type="project" value="UniProtKB-KW"/>
</dbReference>
<dbReference type="Gene3D" id="3.40.50.720">
    <property type="entry name" value="NAD(P)-binding Rossmann-like Domain"/>
    <property type="match status" value="1"/>
</dbReference>
<dbReference type="InterPro" id="IPR036291">
    <property type="entry name" value="NAD(P)-bd_dom_sf"/>
</dbReference>
<dbReference type="SUPFAM" id="SSF51735">
    <property type="entry name" value="NAD(P)-binding Rossmann-fold domains"/>
    <property type="match status" value="1"/>
</dbReference>
<protein>
    <recommendedName>
        <fullName>Malate dehydrogenase</fullName>
        <ecNumber>1.1.1.37</ecNumber>
    </recommendedName>
</protein>
<keyword id="KW-0903">Direct protein sequencing</keyword>
<keyword id="KW-0520">NAD</keyword>
<keyword id="KW-0560">Oxidoreductase</keyword>
<keyword id="KW-0816">Tricarboxylic acid cycle</keyword>
<proteinExistence type="evidence at protein level"/>